<name>ILVD_RIPO1</name>
<organism>
    <name type="scientific">Rippkaea orientalis (strain PCC 8801 / RF-1)</name>
    <name type="common">Cyanothece sp. (strain PCC 8801)</name>
    <dbReference type="NCBI Taxonomy" id="41431"/>
    <lineage>
        <taxon>Bacteria</taxon>
        <taxon>Bacillati</taxon>
        <taxon>Cyanobacteriota</taxon>
        <taxon>Cyanophyceae</taxon>
        <taxon>Oscillatoriophycideae</taxon>
        <taxon>Chroococcales</taxon>
        <taxon>Aphanothecaceae</taxon>
        <taxon>Rippkaea</taxon>
        <taxon>Rippkaea orientalis</taxon>
    </lineage>
</organism>
<feature type="chain" id="PRO_1000116266" description="Dihydroxy-acid dehydratase">
    <location>
        <begin position="1"/>
        <end position="561"/>
    </location>
</feature>
<feature type="active site" description="Proton acceptor" evidence="1">
    <location>
        <position position="473"/>
    </location>
</feature>
<feature type="binding site" evidence="1">
    <location>
        <position position="50"/>
    </location>
    <ligand>
        <name>[2Fe-2S] cluster</name>
        <dbReference type="ChEBI" id="CHEBI:190135"/>
    </ligand>
</feature>
<feature type="binding site" evidence="1">
    <location>
        <position position="82"/>
    </location>
    <ligand>
        <name>Mg(2+)</name>
        <dbReference type="ChEBI" id="CHEBI:18420"/>
    </ligand>
</feature>
<feature type="binding site" evidence="1">
    <location>
        <position position="123"/>
    </location>
    <ligand>
        <name>[2Fe-2S] cluster</name>
        <dbReference type="ChEBI" id="CHEBI:190135"/>
    </ligand>
</feature>
<feature type="binding site" evidence="1">
    <location>
        <position position="124"/>
    </location>
    <ligand>
        <name>Mg(2+)</name>
        <dbReference type="ChEBI" id="CHEBI:18420"/>
    </ligand>
</feature>
<feature type="binding site" description="via carbamate group" evidence="1">
    <location>
        <position position="125"/>
    </location>
    <ligand>
        <name>Mg(2+)</name>
        <dbReference type="ChEBI" id="CHEBI:18420"/>
    </ligand>
</feature>
<feature type="binding site" evidence="1">
    <location>
        <position position="195"/>
    </location>
    <ligand>
        <name>[2Fe-2S] cluster</name>
        <dbReference type="ChEBI" id="CHEBI:190135"/>
    </ligand>
</feature>
<feature type="binding site" evidence="1">
    <location>
        <position position="447"/>
    </location>
    <ligand>
        <name>Mg(2+)</name>
        <dbReference type="ChEBI" id="CHEBI:18420"/>
    </ligand>
</feature>
<feature type="modified residue" description="N6-carboxylysine" evidence="1">
    <location>
        <position position="125"/>
    </location>
</feature>
<keyword id="KW-0001">2Fe-2S</keyword>
<keyword id="KW-0028">Amino-acid biosynthesis</keyword>
<keyword id="KW-0100">Branched-chain amino acid biosynthesis</keyword>
<keyword id="KW-0408">Iron</keyword>
<keyword id="KW-0411">Iron-sulfur</keyword>
<keyword id="KW-0456">Lyase</keyword>
<keyword id="KW-0460">Magnesium</keyword>
<keyword id="KW-0479">Metal-binding</keyword>
<keyword id="KW-1185">Reference proteome</keyword>
<evidence type="ECO:0000255" key="1">
    <source>
        <dbReference type="HAMAP-Rule" id="MF_00012"/>
    </source>
</evidence>
<sequence>MSDNLRSRIVTQGSQRTPNRAMLRAVGFGDNDFIKPIVGVANGYSTITPCNMGLNDLALRAEAGLKSAGAMPQMFGTITISDGISMGTEGMKYSLVSREVIADSIETACNGQSMDGVIAIGGCDKNMPGAMIAIARMNIPAIFVYGGTIKPGHYQGEDLTVVSAFEAVGKYSAGKIDDNELLAIERNACPGAGSCGGMFTANTMSSAFEAMGMSLPYSSTMAAEDAEKADSTEQSAFVLVEAIRKQILPSQILTRKAFENAIAVIMAVGGSTNAVLHLLAIANTMGVELTIDDFETIRKKVPVLCDLKPSGRYVTVNLHQAGGIPQVMKMLLNHGLLHGDALTISGQTIAEVLQDIPDEPPANQDVIRPWNNPVYPEGHLAILKGNLAAEGAVAKISGVKKPKMTGPARVFESEEACLDAILAGKISAGDVVIVRYEGPKGGPGMREMLAPTSAIIGAGLGDSVGLITDGRFSGGTYGLVVGHVAPEAFVGGTIALVNEGDSVTIDAEKRLLQLNVSDEELATRRAHWTPPKPRYQRGILGKYAKLVSSSSLGAVTDVELF</sequence>
<protein>
    <recommendedName>
        <fullName evidence="1">Dihydroxy-acid dehydratase</fullName>
        <shortName evidence="1">DAD</shortName>
        <ecNumber evidence="1">4.2.1.9</ecNumber>
    </recommendedName>
</protein>
<dbReference type="EC" id="4.2.1.9" evidence="1"/>
<dbReference type="EMBL" id="CP001287">
    <property type="protein sequence ID" value="ACK67102.1"/>
    <property type="molecule type" value="Genomic_DNA"/>
</dbReference>
<dbReference type="RefSeq" id="WP_012596363.1">
    <property type="nucleotide sequence ID" value="NC_011726.1"/>
</dbReference>
<dbReference type="SMR" id="B7JXB4"/>
<dbReference type="STRING" id="41431.PCC8801_3121"/>
<dbReference type="KEGG" id="cyp:PCC8801_3121"/>
<dbReference type="eggNOG" id="COG0129">
    <property type="taxonomic scope" value="Bacteria"/>
</dbReference>
<dbReference type="HOGENOM" id="CLU_014271_4_2_3"/>
<dbReference type="OrthoDB" id="9807077at2"/>
<dbReference type="UniPathway" id="UPA00047">
    <property type="reaction ID" value="UER00057"/>
</dbReference>
<dbReference type="UniPathway" id="UPA00049">
    <property type="reaction ID" value="UER00061"/>
</dbReference>
<dbReference type="Proteomes" id="UP000008204">
    <property type="component" value="Chromosome"/>
</dbReference>
<dbReference type="GO" id="GO:0051537">
    <property type="term" value="F:2 iron, 2 sulfur cluster binding"/>
    <property type="evidence" value="ECO:0007669"/>
    <property type="project" value="UniProtKB-UniRule"/>
</dbReference>
<dbReference type="GO" id="GO:0004160">
    <property type="term" value="F:dihydroxy-acid dehydratase activity"/>
    <property type="evidence" value="ECO:0007669"/>
    <property type="project" value="UniProtKB-UniRule"/>
</dbReference>
<dbReference type="GO" id="GO:0000287">
    <property type="term" value="F:magnesium ion binding"/>
    <property type="evidence" value="ECO:0007669"/>
    <property type="project" value="UniProtKB-UniRule"/>
</dbReference>
<dbReference type="GO" id="GO:0009097">
    <property type="term" value="P:isoleucine biosynthetic process"/>
    <property type="evidence" value="ECO:0007669"/>
    <property type="project" value="UniProtKB-UniRule"/>
</dbReference>
<dbReference type="GO" id="GO:0009099">
    <property type="term" value="P:L-valine biosynthetic process"/>
    <property type="evidence" value="ECO:0007669"/>
    <property type="project" value="UniProtKB-UniRule"/>
</dbReference>
<dbReference type="FunFam" id="3.50.30.80:FF:000001">
    <property type="entry name" value="Dihydroxy-acid dehydratase"/>
    <property type="match status" value="1"/>
</dbReference>
<dbReference type="Gene3D" id="3.50.30.80">
    <property type="entry name" value="IlvD/EDD C-terminal domain-like"/>
    <property type="match status" value="1"/>
</dbReference>
<dbReference type="HAMAP" id="MF_00012">
    <property type="entry name" value="IlvD"/>
    <property type="match status" value="1"/>
</dbReference>
<dbReference type="InterPro" id="IPR050165">
    <property type="entry name" value="DHAD_IlvD/Edd"/>
</dbReference>
<dbReference type="InterPro" id="IPR042096">
    <property type="entry name" value="Dihydro-acid_dehy_C"/>
</dbReference>
<dbReference type="InterPro" id="IPR004404">
    <property type="entry name" value="DihydroxyA_deHydtase"/>
</dbReference>
<dbReference type="InterPro" id="IPR020558">
    <property type="entry name" value="DiOHA_6PGluconate_deHydtase_CS"/>
</dbReference>
<dbReference type="InterPro" id="IPR056740">
    <property type="entry name" value="ILV_EDD_C"/>
</dbReference>
<dbReference type="InterPro" id="IPR000581">
    <property type="entry name" value="ILV_EDD_N"/>
</dbReference>
<dbReference type="InterPro" id="IPR037237">
    <property type="entry name" value="IlvD/EDD_N"/>
</dbReference>
<dbReference type="NCBIfam" id="TIGR00110">
    <property type="entry name" value="ilvD"/>
    <property type="match status" value="1"/>
</dbReference>
<dbReference type="NCBIfam" id="NF002068">
    <property type="entry name" value="PRK00911.1"/>
    <property type="match status" value="1"/>
</dbReference>
<dbReference type="PANTHER" id="PTHR21000">
    <property type="entry name" value="DIHYDROXY-ACID DEHYDRATASE DAD"/>
    <property type="match status" value="1"/>
</dbReference>
<dbReference type="PANTHER" id="PTHR21000:SF5">
    <property type="entry name" value="DIHYDROXY-ACID DEHYDRATASE, MITOCHONDRIAL"/>
    <property type="match status" value="1"/>
</dbReference>
<dbReference type="Pfam" id="PF24877">
    <property type="entry name" value="ILV_EDD_C"/>
    <property type="match status" value="1"/>
</dbReference>
<dbReference type="Pfam" id="PF00920">
    <property type="entry name" value="ILVD_EDD_N"/>
    <property type="match status" value="1"/>
</dbReference>
<dbReference type="SUPFAM" id="SSF143975">
    <property type="entry name" value="IlvD/EDD N-terminal domain-like"/>
    <property type="match status" value="1"/>
</dbReference>
<dbReference type="SUPFAM" id="SSF52016">
    <property type="entry name" value="LeuD/IlvD-like"/>
    <property type="match status" value="1"/>
</dbReference>
<dbReference type="PROSITE" id="PS00886">
    <property type="entry name" value="ILVD_EDD_1"/>
    <property type="match status" value="1"/>
</dbReference>
<dbReference type="PROSITE" id="PS00887">
    <property type="entry name" value="ILVD_EDD_2"/>
    <property type="match status" value="1"/>
</dbReference>
<accession>B7JXB4</accession>
<reference key="1">
    <citation type="journal article" date="2011" name="MBio">
        <title>Novel metabolic attributes of the genus Cyanothece, comprising a group of unicellular nitrogen-fixing Cyanobacteria.</title>
        <authorList>
            <person name="Bandyopadhyay A."/>
            <person name="Elvitigala T."/>
            <person name="Welsh E."/>
            <person name="Stockel J."/>
            <person name="Liberton M."/>
            <person name="Min H."/>
            <person name="Sherman L.A."/>
            <person name="Pakrasi H.B."/>
        </authorList>
    </citation>
    <scope>NUCLEOTIDE SEQUENCE [LARGE SCALE GENOMIC DNA]</scope>
    <source>
        <strain>PCC 8801 / RF-1</strain>
    </source>
</reference>
<gene>
    <name evidence="1" type="primary">ilvD</name>
    <name type="ordered locus">PCC8801_3121</name>
</gene>
<proteinExistence type="inferred from homology"/>
<comment type="function">
    <text evidence="1">Functions in the biosynthesis of branched-chain amino acids. Catalyzes the dehydration of (2R,3R)-2,3-dihydroxy-3-methylpentanoate (2,3-dihydroxy-3-methylvalerate) into 2-oxo-3-methylpentanoate (2-oxo-3-methylvalerate) and of (2R)-2,3-dihydroxy-3-methylbutanoate (2,3-dihydroxyisovalerate) into 2-oxo-3-methylbutanoate (2-oxoisovalerate), the penultimate precursor to L-isoleucine and L-valine, respectively.</text>
</comment>
<comment type="catalytic activity">
    <reaction evidence="1">
        <text>(2R)-2,3-dihydroxy-3-methylbutanoate = 3-methyl-2-oxobutanoate + H2O</text>
        <dbReference type="Rhea" id="RHEA:24809"/>
        <dbReference type="ChEBI" id="CHEBI:11851"/>
        <dbReference type="ChEBI" id="CHEBI:15377"/>
        <dbReference type="ChEBI" id="CHEBI:49072"/>
        <dbReference type="EC" id="4.2.1.9"/>
    </reaction>
    <physiologicalReaction direction="left-to-right" evidence="1">
        <dbReference type="Rhea" id="RHEA:24810"/>
    </physiologicalReaction>
</comment>
<comment type="catalytic activity">
    <reaction evidence="1">
        <text>(2R,3R)-2,3-dihydroxy-3-methylpentanoate = (S)-3-methyl-2-oxopentanoate + H2O</text>
        <dbReference type="Rhea" id="RHEA:27694"/>
        <dbReference type="ChEBI" id="CHEBI:15377"/>
        <dbReference type="ChEBI" id="CHEBI:35146"/>
        <dbReference type="ChEBI" id="CHEBI:49258"/>
        <dbReference type="EC" id="4.2.1.9"/>
    </reaction>
    <physiologicalReaction direction="left-to-right" evidence="1">
        <dbReference type="Rhea" id="RHEA:27695"/>
    </physiologicalReaction>
</comment>
<comment type="cofactor">
    <cofactor evidence="1">
        <name>[2Fe-2S] cluster</name>
        <dbReference type="ChEBI" id="CHEBI:190135"/>
    </cofactor>
    <text evidence="1">Binds 1 [2Fe-2S] cluster per subunit. This cluster acts as a Lewis acid cofactor.</text>
</comment>
<comment type="cofactor">
    <cofactor evidence="1">
        <name>Mg(2+)</name>
        <dbReference type="ChEBI" id="CHEBI:18420"/>
    </cofactor>
</comment>
<comment type="pathway">
    <text evidence="1">Amino-acid biosynthesis; L-isoleucine biosynthesis; L-isoleucine from 2-oxobutanoate: step 3/4.</text>
</comment>
<comment type="pathway">
    <text evidence="1">Amino-acid biosynthesis; L-valine biosynthesis; L-valine from pyruvate: step 3/4.</text>
</comment>
<comment type="subunit">
    <text evidence="1">Homodimer.</text>
</comment>
<comment type="similarity">
    <text evidence="1">Belongs to the IlvD/Edd family.</text>
</comment>